<dbReference type="EMBL" id="AF459021">
    <property type="protein sequence ID" value="AAM28438.1"/>
    <property type="molecule type" value="mRNA"/>
</dbReference>
<dbReference type="EMBL" id="BC097281">
    <property type="protein sequence ID" value="AAH97281.1"/>
    <property type="molecule type" value="mRNA"/>
</dbReference>
<dbReference type="RefSeq" id="NP_640347.2">
    <property type="nucleotide sequence ID" value="NM_139254.2"/>
</dbReference>
<dbReference type="SMR" id="Q4QRB4"/>
<dbReference type="BioGRID" id="251505">
    <property type="interactions" value="5"/>
</dbReference>
<dbReference type="FunCoup" id="Q4QRB4">
    <property type="interactions" value="1138"/>
</dbReference>
<dbReference type="IntAct" id="Q4QRB4">
    <property type="interactions" value="8"/>
</dbReference>
<dbReference type="MINT" id="Q4QRB4"/>
<dbReference type="STRING" id="10116.ENSRNOP00000023452"/>
<dbReference type="GlyGen" id="Q4QRB4">
    <property type="glycosylation" value="1 site, 1 O-linked glycan (1 site)"/>
</dbReference>
<dbReference type="iPTMnet" id="Q4QRB4"/>
<dbReference type="PhosphoSitePlus" id="Q4QRB4"/>
<dbReference type="jPOST" id="Q4QRB4"/>
<dbReference type="PaxDb" id="10116-ENSRNOP00000023452"/>
<dbReference type="Ensembl" id="ENSRNOT00000023452.7">
    <property type="protein sequence ID" value="ENSRNOP00000023452.3"/>
    <property type="gene ID" value="ENSRNOG00000017209.7"/>
</dbReference>
<dbReference type="GeneID" id="246118"/>
<dbReference type="KEGG" id="rno:246118"/>
<dbReference type="UCSC" id="RGD:628595">
    <property type="organism name" value="rat"/>
</dbReference>
<dbReference type="AGR" id="RGD:628595"/>
<dbReference type="CTD" id="10381"/>
<dbReference type="RGD" id="628595">
    <property type="gene designation" value="Tubb3"/>
</dbReference>
<dbReference type="eggNOG" id="KOG1375">
    <property type="taxonomic scope" value="Eukaryota"/>
</dbReference>
<dbReference type="GeneTree" id="ENSGT00940000159115"/>
<dbReference type="HOGENOM" id="CLU_015718_1_1_1"/>
<dbReference type="InParanoid" id="Q4QRB4"/>
<dbReference type="OMA" id="CQDEMEG"/>
<dbReference type="OrthoDB" id="26637at9989"/>
<dbReference type="PhylomeDB" id="Q4QRB4"/>
<dbReference type="TreeFam" id="TF300298"/>
<dbReference type="Reactome" id="R-RNO-190840">
    <property type="pathway name" value="Microtubule-dependent trafficking of connexons from Golgi to the plasma membrane"/>
</dbReference>
<dbReference type="Reactome" id="R-RNO-2132295">
    <property type="pathway name" value="MHC class II antigen presentation"/>
</dbReference>
<dbReference type="Reactome" id="R-RNO-2467813">
    <property type="pathway name" value="Separation of Sister Chromatids"/>
</dbReference>
<dbReference type="Reactome" id="R-RNO-2500257">
    <property type="pathway name" value="Resolution of Sister Chromatid Cohesion"/>
</dbReference>
<dbReference type="Reactome" id="R-RNO-3371497">
    <property type="pathway name" value="HSP90 chaperone cycle for steroid hormone receptors (SHR) in the presence of ligand"/>
</dbReference>
<dbReference type="Reactome" id="R-RNO-380320">
    <property type="pathway name" value="Recruitment of NuMA to mitotic centrosomes"/>
</dbReference>
<dbReference type="Reactome" id="R-RNO-437239">
    <property type="pathway name" value="Recycling pathway of L1"/>
</dbReference>
<dbReference type="Reactome" id="R-RNO-5610787">
    <property type="pathway name" value="Hedgehog 'off' state"/>
</dbReference>
<dbReference type="Reactome" id="R-RNO-5617833">
    <property type="pathway name" value="Cilium Assembly"/>
</dbReference>
<dbReference type="Reactome" id="R-RNO-5620924">
    <property type="pathway name" value="Intraflagellar transport"/>
</dbReference>
<dbReference type="Reactome" id="R-RNO-5626467">
    <property type="pathway name" value="RHO GTPases activate IQGAPs"/>
</dbReference>
<dbReference type="Reactome" id="R-RNO-5663220">
    <property type="pathway name" value="RHO GTPases Activate Formins"/>
</dbReference>
<dbReference type="Reactome" id="R-RNO-6807878">
    <property type="pathway name" value="COPI-mediated anterograde transport"/>
</dbReference>
<dbReference type="Reactome" id="R-RNO-6811434">
    <property type="pathway name" value="COPI-dependent Golgi-to-ER retrograde traffic"/>
</dbReference>
<dbReference type="Reactome" id="R-RNO-6811436">
    <property type="pathway name" value="COPI-independent Golgi-to-ER retrograde traffic"/>
</dbReference>
<dbReference type="Reactome" id="R-RNO-68877">
    <property type="pathway name" value="Mitotic Prometaphase"/>
</dbReference>
<dbReference type="Reactome" id="R-RNO-8852276">
    <property type="pathway name" value="The role of GTSE1 in G2/M progression after G2 checkpoint"/>
</dbReference>
<dbReference type="Reactome" id="R-RNO-8955332">
    <property type="pathway name" value="Carboxyterminal post-translational modifications of tubulin"/>
</dbReference>
<dbReference type="Reactome" id="R-RNO-9646399">
    <property type="pathway name" value="Aggrephagy"/>
</dbReference>
<dbReference type="Reactome" id="R-RNO-9648025">
    <property type="pathway name" value="EML4 and NUDC in mitotic spindle formation"/>
</dbReference>
<dbReference type="Reactome" id="R-RNO-9668328">
    <property type="pathway name" value="Sealing of the nuclear envelope (NE) by ESCRT-III"/>
</dbReference>
<dbReference type="Reactome" id="R-RNO-983189">
    <property type="pathway name" value="Kinesins"/>
</dbReference>
<dbReference type="Reactome" id="R-RNO-9833482">
    <property type="pathway name" value="PKR-mediated signaling"/>
</dbReference>
<dbReference type="CD-CODE" id="246D7041">
    <property type="entry name" value="Chromatoid body"/>
</dbReference>
<dbReference type="PRO" id="PR:Q4QRB4"/>
<dbReference type="Proteomes" id="UP000002494">
    <property type="component" value="Chromosome 19"/>
</dbReference>
<dbReference type="Bgee" id="ENSRNOG00000017209">
    <property type="expression patterns" value="Expressed in frontal cortex and 19 other cell types or tissues"/>
</dbReference>
<dbReference type="GO" id="GO:0030424">
    <property type="term" value="C:axon"/>
    <property type="evidence" value="ECO:0000314"/>
    <property type="project" value="MGI"/>
</dbReference>
<dbReference type="GO" id="GO:0071944">
    <property type="term" value="C:cell periphery"/>
    <property type="evidence" value="ECO:0000266"/>
    <property type="project" value="RGD"/>
</dbReference>
<dbReference type="GO" id="GO:0005737">
    <property type="term" value="C:cytoplasm"/>
    <property type="evidence" value="ECO:0000266"/>
    <property type="project" value="RGD"/>
</dbReference>
<dbReference type="GO" id="GO:0030425">
    <property type="term" value="C:dendrite"/>
    <property type="evidence" value="ECO:0000250"/>
    <property type="project" value="ParkinsonsUK-UCL"/>
</dbReference>
<dbReference type="GO" id="GO:0030175">
    <property type="term" value="C:filopodium"/>
    <property type="evidence" value="ECO:0000250"/>
    <property type="project" value="UniProtKB"/>
</dbReference>
<dbReference type="GO" id="GO:0030426">
    <property type="term" value="C:growth cone"/>
    <property type="evidence" value="ECO:0000250"/>
    <property type="project" value="UniProtKB"/>
</dbReference>
<dbReference type="GO" id="GO:0045171">
    <property type="term" value="C:intercellular bridge"/>
    <property type="evidence" value="ECO:0007669"/>
    <property type="project" value="Ensembl"/>
</dbReference>
<dbReference type="GO" id="GO:0030027">
    <property type="term" value="C:lamellipodium"/>
    <property type="evidence" value="ECO:0000250"/>
    <property type="project" value="UniProtKB"/>
</dbReference>
<dbReference type="GO" id="GO:0005874">
    <property type="term" value="C:microtubule"/>
    <property type="evidence" value="ECO:0000266"/>
    <property type="project" value="RGD"/>
</dbReference>
<dbReference type="GO" id="GO:0015630">
    <property type="term" value="C:microtubule cytoskeleton"/>
    <property type="evidence" value="ECO:0000250"/>
    <property type="project" value="UniProtKB"/>
</dbReference>
<dbReference type="GO" id="GO:0072686">
    <property type="term" value="C:mitotic spindle"/>
    <property type="evidence" value="ECO:0007669"/>
    <property type="project" value="Ensembl"/>
</dbReference>
<dbReference type="GO" id="GO:0043025">
    <property type="term" value="C:neuronal cell body"/>
    <property type="evidence" value="ECO:0000266"/>
    <property type="project" value="RGD"/>
</dbReference>
<dbReference type="GO" id="GO:0005525">
    <property type="term" value="F:GTP binding"/>
    <property type="evidence" value="ECO:0000250"/>
    <property type="project" value="UniProtKB"/>
</dbReference>
<dbReference type="GO" id="GO:0003924">
    <property type="term" value="F:GTPase activity"/>
    <property type="evidence" value="ECO:0007669"/>
    <property type="project" value="InterPro"/>
</dbReference>
<dbReference type="GO" id="GO:0046872">
    <property type="term" value="F:metal ion binding"/>
    <property type="evidence" value="ECO:0007669"/>
    <property type="project" value="UniProtKB-KW"/>
</dbReference>
<dbReference type="GO" id="GO:1990890">
    <property type="term" value="F:netrin receptor binding"/>
    <property type="evidence" value="ECO:0000266"/>
    <property type="project" value="RGD"/>
</dbReference>
<dbReference type="GO" id="GO:0042277">
    <property type="term" value="F:peptide binding"/>
    <property type="evidence" value="ECO:0000353"/>
    <property type="project" value="RGD"/>
</dbReference>
<dbReference type="GO" id="GO:0005200">
    <property type="term" value="F:structural constituent of cytoskeleton"/>
    <property type="evidence" value="ECO:0000250"/>
    <property type="project" value="UniProtKB"/>
</dbReference>
<dbReference type="GO" id="GO:0007411">
    <property type="term" value="P:axon guidance"/>
    <property type="evidence" value="ECO:0000250"/>
    <property type="project" value="UniProtKB"/>
</dbReference>
<dbReference type="GO" id="GO:1990791">
    <property type="term" value="P:dorsal root ganglion development"/>
    <property type="evidence" value="ECO:0000250"/>
    <property type="project" value="UniProtKB"/>
</dbReference>
<dbReference type="GO" id="GO:0000226">
    <property type="term" value="P:microtubule cytoskeleton organization"/>
    <property type="evidence" value="ECO:0000250"/>
    <property type="project" value="UniProtKB"/>
</dbReference>
<dbReference type="GO" id="GO:0000278">
    <property type="term" value="P:mitotic cell cycle"/>
    <property type="evidence" value="ECO:0000318"/>
    <property type="project" value="GO_Central"/>
</dbReference>
<dbReference type="GO" id="GO:0038007">
    <property type="term" value="P:netrin-activated signaling pathway"/>
    <property type="evidence" value="ECO:0000250"/>
    <property type="project" value="UniProtKB"/>
</dbReference>
<dbReference type="GO" id="GO:0030182">
    <property type="term" value="P:neuron differentiation"/>
    <property type="evidence" value="ECO:0000315"/>
    <property type="project" value="RGD"/>
</dbReference>
<dbReference type="CDD" id="cd02187">
    <property type="entry name" value="beta_tubulin"/>
    <property type="match status" value="1"/>
</dbReference>
<dbReference type="FunFam" id="1.10.287.600:FF:000002">
    <property type="entry name" value="Tubulin beta chain"/>
    <property type="match status" value="1"/>
</dbReference>
<dbReference type="FunFam" id="3.30.1330.20:FF:000002">
    <property type="entry name" value="Tubulin beta chain"/>
    <property type="match status" value="1"/>
</dbReference>
<dbReference type="FunFam" id="3.40.50.1440:FF:000003">
    <property type="entry name" value="Tubulin beta chain"/>
    <property type="match status" value="1"/>
</dbReference>
<dbReference type="Gene3D" id="1.10.287.600">
    <property type="entry name" value="Helix hairpin bin"/>
    <property type="match status" value="1"/>
</dbReference>
<dbReference type="Gene3D" id="3.30.1330.20">
    <property type="entry name" value="Tubulin/FtsZ, C-terminal domain"/>
    <property type="match status" value="1"/>
</dbReference>
<dbReference type="Gene3D" id="3.40.50.1440">
    <property type="entry name" value="Tubulin/FtsZ, GTPase domain"/>
    <property type="match status" value="1"/>
</dbReference>
<dbReference type="InterPro" id="IPR013838">
    <property type="entry name" value="Beta-tubulin_BS"/>
</dbReference>
<dbReference type="InterPro" id="IPR002453">
    <property type="entry name" value="Beta_tubulin"/>
</dbReference>
<dbReference type="InterPro" id="IPR008280">
    <property type="entry name" value="Tub_FtsZ_C"/>
</dbReference>
<dbReference type="InterPro" id="IPR000217">
    <property type="entry name" value="Tubulin"/>
</dbReference>
<dbReference type="InterPro" id="IPR037103">
    <property type="entry name" value="Tubulin/FtsZ-like_C"/>
</dbReference>
<dbReference type="InterPro" id="IPR018316">
    <property type="entry name" value="Tubulin/FtsZ_2-layer-sand-dom"/>
</dbReference>
<dbReference type="InterPro" id="IPR036525">
    <property type="entry name" value="Tubulin/FtsZ_GTPase_sf"/>
</dbReference>
<dbReference type="InterPro" id="IPR023123">
    <property type="entry name" value="Tubulin_C"/>
</dbReference>
<dbReference type="InterPro" id="IPR017975">
    <property type="entry name" value="Tubulin_CS"/>
</dbReference>
<dbReference type="InterPro" id="IPR003008">
    <property type="entry name" value="Tubulin_FtsZ_GTPase"/>
</dbReference>
<dbReference type="PANTHER" id="PTHR11588">
    <property type="entry name" value="TUBULIN"/>
    <property type="match status" value="1"/>
</dbReference>
<dbReference type="Pfam" id="PF00091">
    <property type="entry name" value="Tubulin"/>
    <property type="match status" value="1"/>
</dbReference>
<dbReference type="Pfam" id="PF03953">
    <property type="entry name" value="Tubulin_C"/>
    <property type="match status" value="1"/>
</dbReference>
<dbReference type="PRINTS" id="PR01163">
    <property type="entry name" value="BETATUBULIN"/>
</dbReference>
<dbReference type="PRINTS" id="PR01161">
    <property type="entry name" value="TUBULIN"/>
</dbReference>
<dbReference type="SMART" id="SM00864">
    <property type="entry name" value="Tubulin"/>
    <property type="match status" value="1"/>
</dbReference>
<dbReference type="SMART" id="SM00865">
    <property type="entry name" value="Tubulin_C"/>
    <property type="match status" value="1"/>
</dbReference>
<dbReference type="SUPFAM" id="SSF55307">
    <property type="entry name" value="Tubulin C-terminal domain-like"/>
    <property type="match status" value="1"/>
</dbReference>
<dbReference type="SUPFAM" id="SSF52490">
    <property type="entry name" value="Tubulin nucleotide-binding domain-like"/>
    <property type="match status" value="1"/>
</dbReference>
<dbReference type="PROSITE" id="PS00227">
    <property type="entry name" value="TUBULIN"/>
    <property type="match status" value="1"/>
</dbReference>
<dbReference type="PROSITE" id="PS00228">
    <property type="entry name" value="TUBULIN_B_AUTOREG"/>
    <property type="match status" value="1"/>
</dbReference>
<gene>
    <name type="primary">Tubb3</name>
</gene>
<feature type="chain" id="PRO_0000233027" description="Tubulin beta-3 chain">
    <location>
        <begin position="1"/>
        <end position="450"/>
    </location>
</feature>
<feature type="region of interest" description="Disordered" evidence="7">
    <location>
        <begin position="422"/>
        <end position="450"/>
    </location>
</feature>
<feature type="short sequence motif" description="MREI motif" evidence="1">
    <location>
        <begin position="1"/>
        <end position="4"/>
    </location>
</feature>
<feature type="compositionally biased region" description="Acidic residues" evidence="7">
    <location>
        <begin position="429"/>
        <end position="450"/>
    </location>
</feature>
<feature type="binding site" evidence="3">
    <location>
        <position position="11"/>
    </location>
    <ligand>
        <name>GTP</name>
        <dbReference type="ChEBI" id="CHEBI:37565"/>
    </ligand>
</feature>
<feature type="binding site" evidence="2">
    <location>
        <position position="69"/>
    </location>
    <ligand>
        <name>GTP</name>
        <dbReference type="ChEBI" id="CHEBI:37565"/>
    </ligand>
</feature>
<feature type="binding site" evidence="2">
    <location>
        <position position="69"/>
    </location>
    <ligand>
        <name>Mg(2+)</name>
        <dbReference type="ChEBI" id="CHEBI:18420"/>
    </ligand>
</feature>
<feature type="binding site" evidence="3">
    <location>
        <position position="138"/>
    </location>
    <ligand>
        <name>GTP</name>
        <dbReference type="ChEBI" id="CHEBI:37565"/>
    </ligand>
</feature>
<feature type="binding site" evidence="3">
    <location>
        <position position="142"/>
    </location>
    <ligand>
        <name>GTP</name>
        <dbReference type="ChEBI" id="CHEBI:37565"/>
    </ligand>
</feature>
<feature type="binding site" evidence="3">
    <location>
        <position position="143"/>
    </location>
    <ligand>
        <name>GTP</name>
        <dbReference type="ChEBI" id="CHEBI:37565"/>
    </ligand>
</feature>
<feature type="binding site" evidence="3">
    <location>
        <position position="144"/>
    </location>
    <ligand>
        <name>GTP</name>
        <dbReference type="ChEBI" id="CHEBI:37565"/>
    </ligand>
</feature>
<feature type="binding site" evidence="3">
    <location>
        <position position="204"/>
    </location>
    <ligand>
        <name>GTP</name>
        <dbReference type="ChEBI" id="CHEBI:37565"/>
    </ligand>
</feature>
<feature type="binding site" evidence="3">
    <location>
        <position position="226"/>
    </location>
    <ligand>
        <name>GTP</name>
        <dbReference type="ChEBI" id="CHEBI:37565"/>
    </ligand>
</feature>
<feature type="modified residue" description="Phosphoserine; by CDK1" evidence="3">
    <location>
        <position position="172"/>
    </location>
</feature>
<feature type="modified residue" description="5-glutamyl polyglutamate" evidence="4">
    <location>
        <position position="438"/>
    </location>
</feature>
<feature type="modified residue" description="Phosphoserine" evidence="4">
    <location>
        <position position="444"/>
    </location>
</feature>
<feature type="sequence conflict" description="In Ref. 1; AAM28438." evidence="8" ref="1">
    <original>D</original>
    <variation>H</variation>
    <location>
        <position position="249"/>
    </location>
</feature>
<feature type="sequence conflict" description="In Ref. 1; AAM28438." evidence="8" ref="1">
    <location>
        <position position="390"/>
    </location>
</feature>
<feature type="sequence conflict" description="In Ref. 1; AAM28438." evidence="8" ref="1">
    <original>E</original>
    <variation>Q</variation>
    <location>
        <position position="401"/>
    </location>
</feature>
<feature type="sequence conflict" description="In Ref. 1; AAM28438." evidence="8" ref="1">
    <original>A</original>
    <variation>R</variation>
    <location>
        <position position="446"/>
    </location>
</feature>
<sequence length="450" mass="50419">MREIVHIQAGQCGNQIGAKFWEVISDEHGIDPSGNYVGDSDLQLERISVYYNEASSHKYVPRAILVDLEPGTMDSVRSGAFGHLFRPDNFIFGQSGAGNNWAKGHYTEGAELVDSVLDVVRKECENCDCLQGFQLTHSLGGGTGSGMGTLLISKVREEYPDRIMNTFSVVPSPKVSDTVVEPYNATLSIHQLVENTDETYCIDNEALYDICFRTLKLATPTYGDLNHLVSATMSGVTTSLRFPGQLNADLRKLAVNMVPFPRLHFFMPGFAPLTARGSQQYRALTVPELTQQMFDAKNMMAACDPRHGRYLTVATVFRGRMSMKEVDEQMLAIQSKNSSYFVEWIPNNVKVAVCDIPPRGLKMSSTFIGNSTAIQELFKRISEQFTAMFRRKAFLHWYTGEGMDEMEFTEAESNMNDLVSEYQQYQDATAEEEGEMYEDDDEESEAQGPK</sequence>
<name>TBB3_RAT</name>
<evidence type="ECO:0000250" key="1">
    <source>
        <dbReference type="UniProtKB" id="P07437"/>
    </source>
</evidence>
<evidence type="ECO:0000250" key="2">
    <source>
        <dbReference type="UniProtKB" id="P68363"/>
    </source>
</evidence>
<evidence type="ECO:0000250" key="3">
    <source>
        <dbReference type="UniProtKB" id="Q13509"/>
    </source>
</evidence>
<evidence type="ECO:0000250" key="4">
    <source>
        <dbReference type="UniProtKB" id="Q2T9S0"/>
    </source>
</evidence>
<evidence type="ECO:0000250" key="5">
    <source>
        <dbReference type="UniProtKB" id="Q71U36"/>
    </source>
</evidence>
<evidence type="ECO:0000250" key="6">
    <source>
        <dbReference type="UniProtKB" id="Q9ERD7"/>
    </source>
</evidence>
<evidence type="ECO:0000256" key="7">
    <source>
        <dbReference type="SAM" id="MobiDB-lite"/>
    </source>
</evidence>
<evidence type="ECO:0000305" key="8"/>
<reference key="1">
    <citation type="journal article" date="2002" name="Gene">
        <title>Cloning and characterization of the 5'-flanking region of the rat neuron-specific class III beta-tubulin gene.</title>
        <authorList>
            <person name="Dennis K."/>
            <person name="Uittenbogaard M."/>
            <person name="Chiaramello A."/>
            <person name="Moody S.A."/>
        </authorList>
    </citation>
    <scope>NUCLEOTIDE SEQUENCE [MRNA]</scope>
    <source>
        <strain>Sprague-Dawley</strain>
    </source>
</reference>
<reference key="2">
    <citation type="journal article" date="2004" name="Genome Res.">
        <title>The status, quality, and expansion of the NIH full-length cDNA project: the Mammalian Gene Collection (MGC).</title>
        <authorList>
            <consortium name="The MGC Project Team"/>
        </authorList>
    </citation>
    <scope>NUCLEOTIDE SEQUENCE [LARGE SCALE MRNA]</scope>
    <source>
        <tissue>Placenta</tissue>
    </source>
</reference>
<reference key="3">
    <citation type="submission" date="2006-11" db="UniProtKB">
        <authorList>
            <person name="Lubec G."/>
            <person name="Afjehi-Sadat L."/>
        </authorList>
    </citation>
    <scope>PROTEIN SEQUENCE OF 104-121</scope>
    <scope>IDENTIFICATION BY MASS SPECTROMETRY</scope>
    <source>
        <strain>Sprague-Dawley</strain>
        <tissue>Spinal cord</tissue>
    </source>
</reference>
<organism>
    <name type="scientific">Rattus norvegicus</name>
    <name type="common">Rat</name>
    <dbReference type="NCBI Taxonomy" id="10116"/>
    <lineage>
        <taxon>Eukaryota</taxon>
        <taxon>Metazoa</taxon>
        <taxon>Chordata</taxon>
        <taxon>Craniata</taxon>
        <taxon>Vertebrata</taxon>
        <taxon>Euteleostomi</taxon>
        <taxon>Mammalia</taxon>
        <taxon>Eutheria</taxon>
        <taxon>Euarchontoglires</taxon>
        <taxon>Glires</taxon>
        <taxon>Rodentia</taxon>
        <taxon>Myomorpha</taxon>
        <taxon>Muroidea</taxon>
        <taxon>Muridae</taxon>
        <taxon>Murinae</taxon>
        <taxon>Rattus</taxon>
    </lineage>
</organism>
<protein>
    <recommendedName>
        <fullName>Tubulin beta-3 chain</fullName>
    </recommendedName>
    <alternativeName>
        <fullName>Neuron-specific class III beta-tubulin</fullName>
    </alternativeName>
</protein>
<accession>Q4QRB4</accession>
<accession>Q8K5B6</accession>
<proteinExistence type="evidence at protein level"/>
<keyword id="KW-0966">Cell projection</keyword>
<keyword id="KW-0963">Cytoplasm</keyword>
<keyword id="KW-0206">Cytoskeleton</keyword>
<keyword id="KW-0903">Direct protein sequencing</keyword>
<keyword id="KW-0342">GTP-binding</keyword>
<keyword id="KW-1017">Isopeptide bond</keyword>
<keyword id="KW-0460">Magnesium</keyword>
<keyword id="KW-0479">Metal-binding</keyword>
<keyword id="KW-0493">Microtubule</keyword>
<keyword id="KW-0547">Nucleotide-binding</keyword>
<keyword id="KW-0597">Phosphoprotein</keyword>
<keyword id="KW-1185">Reference proteome</keyword>
<comment type="function">
    <text evidence="3">Tubulin is the major constituent of microtubules, protein filaments consisting of alpha- and beta-tubulin heterodimers (By similarity). Microtubules grow by the addition of GTP-tubulin dimers to the microtubule end, where a stabilizing cap forms (By similarity). Below the cap, alpha-beta tubulin heterodimers are in GDP-bound state, owing to GTPase activity of alpha-tubulin (By similarity). TUBB3 plays a critical role in proper axon guidance and maintenance (By similarity). Binding of NTN1/Netrin-1 to its receptor UNC5C might cause dissociation of UNC5C from polymerized TUBB3 in microtubules and thereby lead to increased microtubule dynamics and axon repulsion (By similarity). Plays a role in dorsal root ganglion axon projection towards the spinal cord (By similarity).</text>
</comment>
<comment type="cofactor">
    <cofactor evidence="2">
        <name>Mg(2+)</name>
        <dbReference type="ChEBI" id="CHEBI:18420"/>
    </cofactor>
</comment>
<comment type="subunit">
    <text evidence="3 6">Heterodimer of alpha- and beta-tubulin (By similarity). A typical microtubule is a hollow water-filled tube with an outer diameter of 25 nm and an inner diameter of 15 nM (By similarity). Alpha-beta heterodimers associate head-to-tail to form protofilaments running lengthwise along the microtubule wall with the beta-tubulin subunit facing the microtubule plus end conferring a structural polarity (By similarity). Microtubules usually have 13 protofilaments but different protofilament numbers can be found in some organisms and specialized cells (By similarity). Interacts with gamma-tubulin; the interaction allows microtubules to nucleate from the gamma-tubulin ring complex (gTuRC) (By similarity). Interacts with UNC5C (via cytoplasmic domain); this interaction is decreased by NTN1/Netrin-1 (By similarity). Interacts with NLRP5/MATER at cytoskeleton microtubules (By similarity). Interacts with DPYSL5 (By similarity). Interacts with CFAP61 (By similarity).</text>
</comment>
<comment type="subcellular location">
    <subcellularLocation>
        <location evidence="6">Cytoplasm</location>
        <location evidence="6">Cytoskeleton</location>
    </subcellularLocation>
    <subcellularLocation>
        <location evidence="6">Cell projection</location>
        <location evidence="6">Growth cone</location>
    </subcellularLocation>
    <subcellularLocation>
        <location evidence="6">Cell projection</location>
        <location evidence="6">Lamellipodium</location>
    </subcellularLocation>
    <subcellularLocation>
        <location evidence="6">Cell projection</location>
        <location evidence="6">Filopodium</location>
    </subcellularLocation>
</comment>
<comment type="domain">
    <text>The highly acidic C-terminal region may bind cations such as calcium.</text>
</comment>
<comment type="domain">
    <text evidence="1">The MREI motif is common among all beta-tubulin isoforms and may be critical for tubulin autoregulation.</text>
</comment>
<comment type="PTM">
    <text evidence="6">Some glutamate residues at the C-terminus are polyglycylated, resulting in polyglycine chains on the gamma-carboxyl group. Glycylation is mainly limited to tubulin incorporated into axonemes (cilia and flagella) whereas glutamylation is prevalent in neuronal cells, centrioles, axonemes, and the mitotic spindle. Both modifications can coexist on the same protein on adjacent residues, and lowering polyglycylation levels increases polyglutamylation, and reciprocally. Cilia and flagella glycylation is required for their stability and maintenance. Flagella glycylation controls sperm motility.</text>
</comment>
<comment type="PTM">
    <text evidence="5 6">Some glutamate residues at the C-terminus are polyglutamylated, resulting in polyglutamate chains on the gamma-carboxyl group (By similarity). Polyglutamylation plays a key role in microtubule severing by spastin (SPAST). SPAST preferentially recognizes and acts on microtubules decorated with short polyglutamate tails: severing activity by SPAST increases as the number of glutamates per tubulin rises from one to eight, but decreases beyond this glutamylation threshold (By similarity). Glutamylation is also involved in cilia motility (By similarity).</text>
</comment>
<comment type="PTM">
    <text evidence="3">Phosphorylated on Ser-172 by CDK1 during the cell cycle, from metaphase to telophase, but not in interphase. This phosphorylation inhibits tubulin incorporation into microtubules.</text>
</comment>
<comment type="similarity">
    <text evidence="8">Belongs to the tubulin family.</text>
</comment>